<accession>Q5HRN9</accession>
<organism>
    <name type="scientific">Staphylococcus epidermidis (strain ATCC 35984 / DSM 28319 / BCRC 17069 / CCUG 31568 / BM 3577 / RP62A)</name>
    <dbReference type="NCBI Taxonomy" id="176279"/>
    <lineage>
        <taxon>Bacteria</taxon>
        <taxon>Bacillati</taxon>
        <taxon>Bacillota</taxon>
        <taxon>Bacilli</taxon>
        <taxon>Bacillales</taxon>
        <taxon>Staphylococcaceae</taxon>
        <taxon>Staphylococcus</taxon>
    </lineage>
</organism>
<proteinExistence type="inferred from homology"/>
<name>FOLB_STAEQ</name>
<evidence type="ECO:0000250" key="1"/>
<evidence type="ECO:0000250" key="2">
    <source>
        <dbReference type="UniProtKB" id="P0AC16"/>
    </source>
</evidence>
<evidence type="ECO:0000250" key="3">
    <source>
        <dbReference type="UniProtKB" id="P56740"/>
    </source>
</evidence>
<evidence type="ECO:0000305" key="4"/>
<reference key="1">
    <citation type="journal article" date="2005" name="J. Bacteriol.">
        <title>Insights on evolution of virulence and resistance from the complete genome analysis of an early methicillin-resistant Staphylococcus aureus strain and a biofilm-producing methicillin-resistant Staphylococcus epidermidis strain.</title>
        <authorList>
            <person name="Gill S.R."/>
            <person name="Fouts D.E."/>
            <person name="Archer G.L."/>
            <person name="Mongodin E.F."/>
            <person name="DeBoy R.T."/>
            <person name="Ravel J."/>
            <person name="Paulsen I.T."/>
            <person name="Kolonay J.F."/>
            <person name="Brinkac L.M."/>
            <person name="Beanan M.J."/>
            <person name="Dodson R.J."/>
            <person name="Daugherty S.C."/>
            <person name="Madupu R."/>
            <person name="Angiuoli S.V."/>
            <person name="Durkin A.S."/>
            <person name="Haft D.H."/>
            <person name="Vamathevan J.J."/>
            <person name="Khouri H."/>
            <person name="Utterback T.R."/>
            <person name="Lee C."/>
            <person name="Dimitrov G."/>
            <person name="Jiang L."/>
            <person name="Qin H."/>
            <person name="Weidman J."/>
            <person name="Tran K."/>
            <person name="Kang K.H."/>
            <person name="Hance I.R."/>
            <person name="Nelson K.E."/>
            <person name="Fraser C.M."/>
        </authorList>
    </citation>
    <scope>NUCLEOTIDE SEQUENCE [LARGE SCALE GENOMIC DNA]</scope>
    <source>
        <strain>ATCC 35984 / DSM 28319 / BCRC 17069 / CCUG 31568 / BM 3577 / RP62A</strain>
    </source>
</reference>
<gene>
    <name type="primary">folB</name>
    <name type="ordered locus">SERP0154</name>
</gene>
<sequence length="121" mass="13694">MNDIIFLNGMRFYGYHGVLAAENDIGQIFVVDITLKVDLSYAGQSDDVKDTVNYGEVYKDVKSIVEGPRSCLIEHLAERIAKHINSHYNRVMETKVRITKENPPIPGHYDGVGIEIVREND</sequence>
<dbReference type="EC" id="4.1.2.25" evidence="2"/>
<dbReference type="EC" id="5.1.99.8" evidence="2"/>
<dbReference type="EMBL" id="CP000029">
    <property type="protein sequence ID" value="AAW53523.1"/>
    <property type="molecule type" value="Genomic_DNA"/>
</dbReference>
<dbReference type="RefSeq" id="WP_001832204.1">
    <property type="nucleotide sequence ID" value="NC_002976.3"/>
</dbReference>
<dbReference type="SMR" id="Q5HRN9"/>
<dbReference type="STRING" id="176279.SERP0154"/>
<dbReference type="GeneID" id="50019574"/>
<dbReference type="KEGG" id="ser:SERP0154"/>
<dbReference type="eggNOG" id="COG1539">
    <property type="taxonomic scope" value="Bacteria"/>
</dbReference>
<dbReference type="HOGENOM" id="CLU_112632_1_3_9"/>
<dbReference type="UniPathway" id="UPA00077">
    <property type="reaction ID" value="UER00154"/>
</dbReference>
<dbReference type="Proteomes" id="UP000000531">
    <property type="component" value="Chromosome"/>
</dbReference>
<dbReference type="GO" id="GO:0005737">
    <property type="term" value="C:cytoplasm"/>
    <property type="evidence" value="ECO:0007669"/>
    <property type="project" value="TreeGrafter"/>
</dbReference>
<dbReference type="GO" id="GO:0004150">
    <property type="term" value="F:dihydroneopterin aldolase activity"/>
    <property type="evidence" value="ECO:0007669"/>
    <property type="project" value="UniProtKB-EC"/>
</dbReference>
<dbReference type="GO" id="GO:0016853">
    <property type="term" value="F:isomerase activity"/>
    <property type="evidence" value="ECO:0007669"/>
    <property type="project" value="UniProtKB-KW"/>
</dbReference>
<dbReference type="GO" id="GO:0046656">
    <property type="term" value="P:folic acid biosynthetic process"/>
    <property type="evidence" value="ECO:0007669"/>
    <property type="project" value="UniProtKB-KW"/>
</dbReference>
<dbReference type="GO" id="GO:0046654">
    <property type="term" value="P:tetrahydrofolate biosynthetic process"/>
    <property type="evidence" value="ECO:0007669"/>
    <property type="project" value="UniProtKB-UniPathway"/>
</dbReference>
<dbReference type="CDD" id="cd00534">
    <property type="entry name" value="DHNA_DHNTPE"/>
    <property type="match status" value="1"/>
</dbReference>
<dbReference type="FunFam" id="3.30.1130.10:FF:000003">
    <property type="entry name" value="7,8-dihydroneopterin aldolase"/>
    <property type="match status" value="1"/>
</dbReference>
<dbReference type="Gene3D" id="3.30.1130.10">
    <property type="match status" value="1"/>
</dbReference>
<dbReference type="InterPro" id="IPR006156">
    <property type="entry name" value="Dihydroneopterin_aldolase"/>
</dbReference>
<dbReference type="InterPro" id="IPR006157">
    <property type="entry name" value="FolB_dom"/>
</dbReference>
<dbReference type="InterPro" id="IPR043133">
    <property type="entry name" value="GTP-CH-I_C/QueF"/>
</dbReference>
<dbReference type="NCBIfam" id="TIGR00525">
    <property type="entry name" value="folB"/>
    <property type="match status" value="1"/>
</dbReference>
<dbReference type="NCBIfam" id="TIGR00526">
    <property type="entry name" value="folB_dom"/>
    <property type="match status" value="1"/>
</dbReference>
<dbReference type="PANTHER" id="PTHR42844">
    <property type="entry name" value="DIHYDRONEOPTERIN ALDOLASE 1-RELATED"/>
    <property type="match status" value="1"/>
</dbReference>
<dbReference type="PANTHER" id="PTHR42844:SF1">
    <property type="entry name" value="DIHYDRONEOPTERIN ALDOLASE 1-RELATED"/>
    <property type="match status" value="1"/>
</dbReference>
<dbReference type="Pfam" id="PF02152">
    <property type="entry name" value="FolB"/>
    <property type="match status" value="1"/>
</dbReference>
<dbReference type="SMART" id="SM00905">
    <property type="entry name" value="FolB"/>
    <property type="match status" value="1"/>
</dbReference>
<dbReference type="SUPFAM" id="SSF55620">
    <property type="entry name" value="Tetrahydrobiopterin biosynthesis enzymes-like"/>
    <property type="match status" value="1"/>
</dbReference>
<keyword id="KW-0289">Folate biosynthesis</keyword>
<keyword id="KW-0413">Isomerase</keyword>
<keyword id="KW-0456">Lyase</keyword>
<keyword id="KW-1185">Reference proteome</keyword>
<feature type="chain" id="PRO_0000168285" description="Dihydroneopterin aldolase">
    <location>
        <begin position="1"/>
        <end position="121"/>
    </location>
</feature>
<feature type="active site" description="Proton donor/acceptor" evidence="3">
    <location>
        <position position="100"/>
    </location>
</feature>
<feature type="binding site" evidence="3">
    <location>
        <position position="22"/>
    </location>
    <ligand>
        <name>substrate</name>
    </ligand>
</feature>
<feature type="binding site" evidence="3">
    <location>
        <position position="54"/>
    </location>
    <ligand>
        <name>substrate</name>
    </ligand>
</feature>
<feature type="binding site" evidence="3">
    <location>
        <begin position="73"/>
        <end position="74"/>
    </location>
    <ligand>
        <name>substrate</name>
    </ligand>
</feature>
<comment type="function">
    <text evidence="3">Catalyzes the conversion of 7,8-dihydroneopterin to 6-hydroxymethyl-7,8-dihydropterin. Can also catalyze the epimerization of carbon 2' of dihydroneopterin to dihydromonapterin.</text>
</comment>
<comment type="catalytic activity">
    <reaction evidence="3">
        <text>7,8-dihydroneopterin = 6-hydroxymethyl-7,8-dihydropterin + glycolaldehyde</text>
        <dbReference type="Rhea" id="RHEA:10540"/>
        <dbReference type="ChEBI" id="CHEBI:17001"/>
        <dbReference type="ChEBI" id="CHEBI:17071"/>
        <dbReference type="ChEBI" id="CHEBI:44841"/>
        <dbReference type="EC" id="4.1.2.25"/>
    </reaction>
</comment>
<comment type="catalytic activity">
    <reaction evidence="2">
        <text>7,8-dihydroneopterin = 7,8-dihydromonapterin</text>
        <dbReference type="Rhea" id="RHEA:45328"/>
        <dbReference type="ChEBI" id="CHEBI:17001"/>
        <dbReference type="ChEBI" id="CHEBI:71175"/>
        <dbReference type="EC" id="5.1.99.8"/>
    </reaction>
</comment>
<comment type="pathway">
    <text>Cofactor biosynthesis; tetrahydrofolate biosynthesis; 2-amino-4-hydroxy-6-hydroxymethyl-7,8-dihydropteridine diphosphate from 7,8-dihydroneopterin triphosphate: step 3/4.</text>
</comment>
<comment type="subunit">
    <text evidence="1">Homooctamer. Four molecules assemble into a ring, and two rings come together to give a cylinder with a hole of at least 13 a diameter (By similarity).</text>
</comment>
<comment type="similarity">
    <text evidence="4">Belongs to the DHNA family.</text>
</comment>
<protein>
    <recommendedName>
        <fullName>Dihydroneopterin aldolase</fullName>
        <shortName>DHNA</shortName>
        <ecNumber evidence="2">4.1.2.25</ecNumber>
    </recommendedName>
    <alternativeName>
        <fullName>7,8-dihydroneopterin 2'-epimerase</fullName>
    </alternativeName>
    <alternativeName>
        <fullName>7,8-dihydroneopterin aldolase</fullName>
    </alternativeName>
    <alternativeName>
        <fullName>7,8-dihydroneopterin epimerase</fullName>
        <ecNumber evidence="2">5.1.99.8</ecNumber>
    </alternativeName>
    <alternativeName>
        <fullName>Dihydroneopterin epimerase</fullName>
    </alternativeName>
</protein>